<dbReference type="EMBL" id="AP002065">
    <property type="protein sequence ID" value="BAB01974.1"/>
    <property type="molecule type" value="Genomic_DNA"/>
</dbReference>
<dbReference type="EMBL" id="CP002686">
    <property type="protein sequence ID" value="AEE76252.1"/>
    <property type="molecule type" value="Genomic_DNA"/>
</dbReference>
<dbReference type="EMBL" id="CP002686">
    <property type="protein sequence ID" value="AEE76253.1"/>
    <property type="molecule type" value="Genomic_DNA"/>
</dbReference>
<dbReference type="EMBL" id="BT003826">
    <property type="protein sequence ID" value="AAO41878.1"/>
    <property type="molecule type" value="mRNA"/>
</dbReference>
<dbReference type="EMBL" id="BT005127">
    <property type="protein sequence ID" value="AAO50660.1"/>
    <property type="molecule type" value="mRNA"/>
</dbReference>
<dbReference type="EMBL" id="AY087790">
    <property type="protein sequence ID" value="AAM65326.1"/>
    <property type="molecule type" value="mRNA"/>
</dbReference>
<dbReference type="RefSeq" id="NP_001118662.1">
    <property type="nucleotide sequence ID" value="NM_001125190.1"/>
</dbReference>
<dbReference type="RefSeq" id="NP_566641.1">
    <property type="nucleotide sequence ID" value="NM_112841.5"/>
</dbReference>
<dbReference type="SMR" id="Q9LH42"/>
<dbReference type="BioGRID" id="6821">
    <property type="interactions" value="5"/>
</dbReference>
<dbReference type="FunCoup" id="Q9LH42">
    <property type="interactions" value="236"/>
</dbReference>
<dbReference type="IntAct" id="Q9LH42">
    <property type="interactions" value="2"/>
</dbReference>
<dbReference type="STRING" id="3702.Q9LH42"/>
<dbReference type="iPTMnet" id="Q9LH42"/>
<dbReference type="PaxDb" id="3702-AT3G19520.1"/>
<dbReference type="ProteomicsDB" id="234603"/>
<dbReference type="EnsemblPlants" id="AT3G19520.1">
    <property type="protein sequence ID" value="AT3G19520.1"/>
    <property type="gene ID" value="AT3G19520"/>
</dbReference>
<dbReference type="EnsemblPlants" id="AT3G19520.2">
    <property type="protein sequence ID" value="AT3G19520.2"/>
    <property type="gene ID" value="AT3G19520"/>
</dbReference>
<dbReference type="GeneID" id="821488"/>
<dbReference type="Gramene" id="AT3G19520.1">
    <property type="protein sequence ID" value="AT3G19520.1"/>
    <property type="gene ID" value="AT3G19520"/>
</dbReference>
<dbReference type="Gramene" id="AT3G19520.2">
    <property type="protein sequence ID" value="AT3G19520.2"/>
    <property type="gene ID" value="AT3G19520"/>
</dbReference>
<dbReference type="KEGG" id="ath:AT3G19520"/>
<dbReference type="Araport" id="AT3G19520"/>
<dbReference type="TAIR" id="AT3G19520"/>
<dbReference type="HOGENOM" id="CLU_053767_0_1_1"/>
<dbReference type="InParanoid" id="Q9LH42"/>
<dbReference type="PhylomeDB" id="Q9LH42"/>
<dbReference type="PRO" id="PR:Q9LH42"/>
<dbReference type="Proteomes" id="UP000006548">
    <property type="component" value="Chromosome 3"/>
</dbReference>
<dbReference type="ExpressionAtlas" id="Q9LH42">
    <property type="expression patterns" value="baseline and differential"/>
</dbReference>
<dbReference type="InterPro" id="IPR006462">
    <property type="entry name" value="MS5"/>
</dbReference>
<dbReference type="NCBIfam" id="TIGR01572">
    <property type="entry name" value="A_thl_para_3677"/>
    <property type="match status" value="1"/>
</dbReference>
<dbReference type="PANTHER" id="PTHR31260:SF77">
    <property type="entry name" value="(RAPE) HYPOTHETICAL PROTEIN"/>
    <property type="match status" value="1"/>
</dbReference>
<dbReference type="PANTHER" id="PTHR31260">
    <property type="entry name" value="CYSTATIN/MONELLIN SUPERFAMILY PROTEIN"/>
    <property type="match status" value="1"/>
</dbReference>
<dbReference type="Pfam" id="PF04776">
    <property type="entry name" value="protein_MS5"/>
    <property type="match status" value="1"/>
</dbReference>
<name>Y3195_ARATH</name>
<reference key="1">
    <citation type="journal article" date="2000" name="DNA Res.">
        <title>Structural analysis of Arabidopsis thaliana chromosome 3. II. Sequence features of the 4,251,695 bp regions covered by 90 P1, TAC and BAC clones.</title>
        <authorList>
            <person name="Kaneko T."/>
            <person name="Katoh T."/>
            <person name="Sato S."/>
            <person name="Nakamura Y."/>
            <person name="Asamizu E."/>
            <person name="Tabata S."/>
        </authorList>
    </citation>
    <scope>NUCLEOTIDE SEQUENCE [LARGE SCALE GENOMIC DNA]</scope>
    <source>
        <strain>cv. Columbia</strain>
    </source>
</reference>
<reference key="2">
    <citation type="journal article" date="2017" name="Plant J.">
        <title>Araport11: a complete reannotation of the Arabidopsis thaliana reference genome.</title>
        <authorList>
            <person name="Cheng C.Y."/>
            <person name="Krishnakumar V."/>
            <person name="Chan A.P."/>
            <person name="Thibaud-Nissen F."/>
            <person name="Schobel S."/>
            <person name="Town C.D."/>
        </authorList>
    </citation>
    <scope>GENOME REANNOTATION</scope>
    <source>
        <strain>cv. Columbia</strain>
    </source>
</reference>
<reference key="3">
    <citation type="journal article" date="2003" name="Science">
        <title>Empirical analysis of transcriptional activity in the Arabidopsis genome.</title>
        <authorList>
            <person name="Yamada K."/>
            <person name="Lim J."/>
            <person name="Dale J.M."/>
            <person name="Chen H."/>
            <person name="Shinn P."/>
            <person name="Palm C.J."/>
            <person name="Southwick A.M."/>
            <person name="Wu H.C."/>
            <person name="Kim C.J."/>
            <person name="Nguyen M."/>
            <person name="Pham P.K."/>
            <person name="Cheuk R.F."/>
            <person name="Karlin-Newmann G."/>
            <person name="Liu S.X."/>
            <person name="Lam B."/>
            <person name="Sakano H."/>
            <person name="Wu T."/>
            <person name="Yu G."/>
            <person name="Miranda M."/>
            <person name="Quach H.L."/>
            <person name="Tripp M."/>
            <person name="Chang C.H."/>
            <person name="Lee J.M."/>
            <person name="Toriumi M.J."/>
            <person name="Chan M.M."/>
            <person name="Tang C.C."/>
            <person name="Onodera C.S."/>
            <person name="Deng J.M."/>
            <person name="Akiyama K."/>
            <person name="Ansari Y."/>
            <person name="Arakawa T."/>
            <person name="Banh J."/>
            <person name="Banno F."/>
            <person name="Bowser L."/>
            <person name="Brooks S.Y."/>
            <person name="Carninci P."/>
            <person name="Chao Q."/>
            <person name="Choy N."/>
            <person name="Enju A."/>
            <person name="Goldsmith A.D."/>
            <person name="Gurjal M."/>
            <person name="Hansen N.F."/>
            <person name="Hayashizaki Y."/>
            <person name="Johnson-Hopson C."/>
            <person name="Hsuan V.W."/>
            <person name="Iida K."/>
            <person name="Karnes M."/>
            <person name="Khan S."/>
            <person name="Koesema E."/>
            <person name="Ishida J."/>
            <person name="Jiang P.X."/>
            <person name="Jones T."/>
            <person name="Kawai J."/>
            <person name="Kamiya A."/>
            <person name="Meyers C."/>
            <person name="Nakajima M."/>
            <person name="Narusaka M."/>
            <person name="Seki M."/>
            <person name="Sakurai T."/>
            <person name="Satou M."/>
            <person name="Tamse R."/>
            <person name="Vaysberg M."/>
            <person name="Wallender E.K."/>
            <person name="Wong C."/>
            <person name="Yamamura Y."/>
            <person name="Yuan S."/>
            <person name="Shinozaki K."/>
            <person name="Davis R.W."/>
            <person name="Theologis A."/>
            <person name="Ecker J.R."/>
        </authorList>
    </citation>
    <scope>NUCLEOTIDE SEQUENCE [LARGE SCALE MRNA]</scope>
    <source>
        <strain>cv. Columbia</strain>
    </source>
</reference>
<reference key="4">
    <citation type="submission" date="2002-03" db="EMBL/GenBank/DDBJ databases">
        <title>Full-length cDNA from Arabidopsis thaliana.</title>
        <authorList>
            <person name="Brover V.V."/>
            <person name="Troukhan M.E."/>
            <person name="Alexandrov N.A."/>
            <person name="Lu Y.-P."/>
            <person name="Flavell R.B."/>
            <person name="Feldmann K.A."/>
        </authorList>
    </citation>
    <scope>NUCLEOTIDE SEQUENCE [LARGE SCALE MRNA]</scope>
</reference>
<sequence length="312" mass="35948">MTSLSVNDRKDFVDGQMKYWRQIAESDGFDIDDVPVPRGTRAGLWSVDCKHPRFRLRACLPKIYAMVGLHRYNLLRGTNFEHLELLKYNESMNCVCSYYITSVAVDLSSQLQKTFQIRVDEKSFGDLDLTVSVARPNDEEKVTTEKRFIHHFHCEAAADDFYKGALPDWPSVGDLNNQKRFYMVKKCELQSNDWIRLYLELAVGVRYQQTSESDLSKLQVLKVAIETKEEDVQPPNRRLKSKSLHVYITFKGLAKAPIGDEIGEHVERKAIVRRVIDERSGHLTLLGGFSNAKNDLNQSSDDEQPFGKRRRI</sequence>
<feature type="chain" id="PRO_0000363131" description="UPF0725 protein At3g19520">
    <location>
        <begin position="1"/>
        <end position="312"/>
    </location>
</feature>
<feature type="sequence conflict" description="In Ref. 4; AAM65326." evidence="1" ref="4">
    <original>N</original>
    <variation>S</variation>
    <location>
        <position position="137"/>
    </location>
</feature>
<feature type="sequence conflict" description="In Ref. 4; AAM65326." evidence="1" ref="4">
    <original>G</original>
    <variation>S</variation>
    <location>
        <position position="263"/>
    </location>
</feature>
<keyword id="KW-1185">Reference proteome</keyword>
<protein>
    <recommendedName>
        <fullName>UPF0725 protein At3g19520</fullName>
    </recommendedName>
</protein>
<accession>Q9LH42</accession>
<accession>Q8LAI5</accession>
<proteinExistence type="evidence at transcript level"/>
<evidence type="ECO:0000305" key="1"/>
<organism>
    <name type="scientific">Arabidopsis thaliana</name>
    <name type="common">Mouse-ear cress</name>
    <dbReference type="NCBI Taxonomy" id="3702"/>
    <lineage>
        <taxon>Eukaryota</taxon>
        <taxon>Viridiplantae</taxon>
        <taxon>Streptophyta</taxon>
        <taxon>Embryophyta</taxon>
        <taxon>Tracheophyta</taxon>
        <taxon>Spermatophyta</taxon>
        <taxon>Magnoliopsida</taxon>
        <taxon>eudicotyledons</taxon>
        <taxon>Gunneridae</taxon>
        <taxon>Pentapetalae</taxon>
        <taxon>rosids</taxon>
        <taxon>malvids</taxon>
        <taxon>Brassicales</taxon>
        <taxon>Brassicaceae</taxon>
        <taxon>Camelineae</taxon>
        <taxon>Arabidopsis</taxon>
    </lineage>
</organism>
<gene>
    <name type="ordered locus">At3g19520</name>
    <name type="ORF">T31J18.2</name>
</gene>
<comment type="similarity">
    <text evidence="1">Belongs to the UPF0725 (EMB2204) family.</text>
</comment>